<sequence>MQANINWLDNPEVFRVNQLPAHSDHPFFRDYREWQKQHSSYQQSLNGKWKFHFSANPMDRPQDFYQRDFDSSNFDSIPVPSEIELSNYTQNQYINVLFPWEGKIFRRPAYALDPNDHEEGSFSKGADNTVGSYLKRFDLSSALIGKDVHIKFEGVEQAMYVWLNGHFVGYAEDSFTPSEFDLTPYIQDKDNLLAVEVFKHSTASWLEDQDMFRFSGIFRSVELLGIPATHLMDMDLKPRVADNYQDGIFNLKLHFIGKKAGSFHLLVKDIKGHTLLEKNEDIKENVQINNEKFENVHLWNNHDPYLYQLLIEVYDEQQNLLELIPFQFGFRRIEISPEKVVLLNGKRLIINGVNRHEWDAKRGRSITMSDMTTDINTFKENNINAVRTCHYPNQIPWYYLCDQNGIYVMAENNLESHGTWQKMGEIEPSDNVPGSIPQWKEAVIDRARINYETFKNHTSILFWSLGNESYAGDNIIAMNEFYKSHDDTRLVHYEGVVHRPELKDKISDVESCMYLPPKKVEEYLQNDPPKPFMECEYMHDMGNSDGGMGSYIKLLDKYPQYFGGFIWDFIDQALLVHDEISGHDVLRYGGDFDDRHSDYEFSGDGLMFADRTPKPAMQEVRYYYGLHK</sequence>
<organism>
    <name type="scientific">Lactobacillus helveticus</name>
    <name type="common">Lactobacillus suntoryeus</name>
    <dbReference type="NCBI Taxonomy" id="1587"/>
    <lineage>
        <taxon>Bacteria</taxon>
        <taxon>Bacillati</taxon>
        <taxon>Bacillota</taxon>
        <taxon>Bacilli</taxon>
        <taxon>Lactobacillales</taxon>
        <taxon>Lactobacillaceae</taxon>
        <taxon>Lactobacillus</taxon>
    </lineage>
</organism>
<feature type="chain" id="PRO_0000057667" description="Beta-galactosidase large subunit">
    <location>
        <begin position="1"/>
        <end position="628"/>
    </location>
</feature>
<feature type="active site" description="Proton donor" evidence="1">
    <location>
        <position position="468"/>
    </location>
</feature>
<feature type="active site" description="Nucleophile" evidence="1">
    <location>
        <position position="536"/>
    </location>
</feature>
<gene>
    <name evidence="4" type="primary">lacL</name>
</gene>
<dbReference type="EC" id="3.2.1.23" evidence="2"/>
<dbReference type="EMBL" id="AJ512877">
    <property type="protein sequence ID" value="CAD55499.1"/>
    <property type="molecule type" value="Genomic_DNA"/>
</dbReference>
<dbReference type="SMR" id="Q7WTB4"/>
<dbReference type="CAZy" id="GH2">
    <property type="family name" value="Glycoside Hydrolase Family 2"/>
</dbReference>
<dbReference type="eggNOG" id="COG3250">
    <property type="taxonomic scope" value="Bacteria"/>
</dbReference>
<dbReference type="GO" id="GO:0009341">
    <property type="term" value="C:beta-galactosidase complex"/>
    <property type="evidence" value="ECO:0007669"/>
    <property type="project" value="TreeGrafter"/>
</dbReference>
<dbReference type="GO" id="GO:0004565">
    <property type="term" value="F:beta-galactosidase activity"/>
    <property type="evidence" value="ECO:0007669"/>
    <property type="project" value="UniProtKB-EC"/>
</dbReference>
<dbReference type="GO" id="GO:0005990">
    <property type="term" value="P:lactose catabolic process"/>
    <property type="evidence" value="ECO:0007669"/>
    <property type="project" value="TreeGrafter"/>
</dbReference>
<dbReference type="Gene3D" id="2.60.120.260">
    <property type="entry name" value="Galactose-binding domain-like"/>
    <property type="match status" value="1"/>
</dbReference>
<dbReference type="Gene3D" id="3.20.20.80">
    <property type="entry name" value="Glycosidases"/>
    <property type="match status" value="1"/>
</dbReference>
<dbReference type="Gene3D" id="2.60.40.10">
    <property type="entry name" value="Immunoglobulins"/>
    <property type="match status" value="1"/>
</dbReference>
<dbReference type="InterPro" id="IPR050347">
    <property type="entry name" value="Bact_Beta-galactosidase"/>
</dbReference>
<dbReference type="InterPro" id="IPR036156">
    <property type="entry name" value="Beta-gal/glucu_dom_sf"/>
</dbReference>
<dbReference type="InterPro" id="IPR008979">
    <property type="entry name" value="Galactose-bd-like_sf"/>
</dbReference>
<dbReference type="InterPro" id="IPR006101">
    <property type="entry name" value="Glyco_hydro_2"/>
</dbReference>
<dbReference type="InterPro" id="IPR023232">
    <property type="entry name" value="Glyco_hydro_2_AS"/>
</dbReference>
<dbReference type="InterPro" id="IPR006103">
    <property type="entry name" value="Glyco_hydro_2_cat"/>
</dbReference>
<dbReference type="InterPro" id="IPR023230">
    <property type="entry name" value="Glyco_hydro_2_CS"/>
</dbReference>
<dbReference type="InterPro" id="IPR006102">
    <property type="entry name" value="Glyco_hydro_2_Ig-like"/>
</dbReference>
<dbReference type="InterPro" id="IPR006104">
    <property type="entry name" value="Glyco_hydro_2_N"/>
</dbReference>
<dbReference type="InterPro" id="IPR017853">
    <property type="entry name" value="Glycoside_hydrolase_SF"/>
</dbReference>
<dbReference type="InterPro" id="IPR013783">
    <property type="entry name" value="Ig-like_fold"/>
</dbReference>
<dbReference type="PANTHER" id="PTHR46323">
    <property type="entry name" value="BETA-GALACTOSIDASE"/>
    <property type="match status" value="1"/>
</dbReference>
<dbReference type="PANTHER" id="PTHR46323:SF2">
    <property type="entry name" value="BETA-GALACTOSIDASE"/>
    <property type="match status" value="1"/>
</dbReference>
<dbReference type="Pfam" id="PF00703">
    <property type="entry name" value="Glyco_hydro_2"/>
    <property type="match status" value="1"/>
</dbReference>
<dbReference type="Pfam" id="PF02836">
    <property type="entry name" value="Glyco_hydro_2_C"/>
    <property type="match status" value="1"/>
</dbReference>
<dbReference type="Pfam" id="PF02837">
    <property type="entry name" value="Glyco_hydro_2_N"/>
    <property type="match status" value="1"/>
</dbReference>
<dbReference type="PRINTS" id="PR00132">
    <property type="entry name" value="GLHYDRLASE2"/>
</dbReference>
<dbReference type="SUPFAM" id="SSF51445">
    <property type="entry name" value="(Trans)glycosidases"/>
    <property type="match status" value="1"/>
</dbReference>
<dbReference type="SUPFAM" id="SSF49303">
    <property type="entry name" value="beta-Galactosidase/glucuronidase domain"/>
    <property type="match status" value="1"/>
</dbReference>
<dbReference type="SUPFAM" id="SSF49785">
    <property type="entry name" value="Galactose-binding domain-like"/>
    <property type="match status" value="1"/>
</dbReference>
<dbReference type="PROSITE" id="PS00719">
    <property type="entry name" value="GLYCOSYL_HYDROL_F2_1"/>
    <property type="match status" value="1"/>
</dbReference>
<dbReference type="PROSITE" id="PS00608">
    <property type="entry name" value="GLYCOSYL_HYDROL_F2_2"/>
    <property type="match status" value="1"/>
</dbReference>
<reference key="1">
    <citation type="journal article" date="2003" name="Appl. Environ. Microbiol.">
        <title>Unusual organization for lactose and galactose gene clusters in Lactobacillus helveticus.</title>
        <authorList>
            <person name="Fortina M.G."/>
            <person name="Ricci G."/>
            <person name="Mora D."/>
            <person name="Guglielmetti S."/>
            <person name="Manachini P.L."/>
        </authorList>
    </citation>
    <scope>NUCLEOTIDE SEQUENCE [GENOMIC DNA]</scope>
    <scope>TRANSCRIPTIONAL REGULATION</scope>
    <source>
        <strain>ATCC 15009 / DSM 20075 / BCRC 12936 / JCM 1120 / NBRC 15019 / NCIMB 11971 / NRRL B-4526 / Lh12</strain>
    </source>
</reference>
<name>BGAL_LACHE</name>
<comment type="function">
    <text evidence="2">Component of a beta-galactosidase.</text>
</comment>
<comment type="catalytic activity">
    <reaction evidence="2">
        <text>Hydrolysis of terminal non-reducing beta-D-galactose residues in beta-D-galactosides.</text>
        <dbReference type="EC" id="3.2.1.23"/>
    </reaction>
</comment>
<comment type="subunit">
    <text evidence="2">Heterodimer of a large (LacL) and a small subunit (LacM).</text>
</comment>
<comment type="induction">
    <text evidence="3">By lactose. Part of an operon consisting of lacL, lacM, and galE.</text>
</comment>
<comment type="similarity">
    <text evidence="5">Belongs to the glycosyl hydrolase 2 family.</text>
</comment>
<accession>Q7WTB4</accession>
<proteinExistence type="evidence at transcript level"/>
<keyword id="KW-0326">Glycosidase</keyword>
<keyword id="KW-0378">Hydrolase</keyword>
<protein>
    <recommendedName>
        <fullName evidence="6">Beta-galactosidase large subunit</fullName>
        <shortName evidence="6">Beta-gal large subunit</shortName>
        <ecNumber evidence="2">3.2.1.23</ecNumber>
    </recommendedName>
</protein>
<evidence type="ECO:0000250" key="1"/>
<evidence type="ECO:0000250" key="2">
    <source>
        <dbReference type="UniProtKB" id="Q02603"/>
    </source>
</evidence>
<evidence type="ECO:0000269" key="3">
    <source>
    </source>
</evidence>
<evidence type="ECO:0000303" key="4">
    <source>
    </source>
</evidence>
<evidence type="ECO:0000305" key="5"/>
<evidence type="ECO:0000305" key="6">
    <source>
    </source>
</evidence>